<accession>A1WB87</accession>
<sequence>MPFDARTRPLTAPQARVLATLLEKSRTVPDSYPLTLNSLLAGCNQKSSRDPVMQLTESEVQQALDELRQQTLVLEIGGARVARWEHNFTRGVGVPDQSAALLGLLMLRGPQTAGELRINAERWHRFADISSVEAFLDELQSRSDDKGGPLVTLLPRAPGAREPRWAHLLCGPVDASLAQMASASPASRSEEDGALAQRVQALEDEVAALRATVQRLCEQLGVAEH</sequence>
<proteinExistence type="inferred from homology"/>
<feature type="chain" id="PRO_0000309367" description="UPF0502 protein Ajs_3392">
    <location>
        <begin position="1"/>
        <end position="225"/>
    </location>
</feature>
<gene>
    <name type="ordered locus">Ajs_3392</name>
</gene>
<reference key="1">
    <citation type="submission" date="2006-12" db="EMBL/GenBank/DDBJ databases">
        <title>Complete sequence of chromosome 1 of Acidovorax sp. JS42.</title>
        <authorList>
            <person name="Copeland A."/>
            <person name="Lucas S."/>
            <person name="Lapidus A."/>
            <person name="Barry K."/>
            <person name="Detter J.C."/>
            <person name="Glavina del Rio T."/>
            <person name="Dalin E."/>
            <person name="Tice H."/>
            <person name="Pitluck S."/>
            <person name="Chertkov O."/>
            <person name="Brettin T."/>
            <person name="Bruce D."/>
            <person name="Han C."/>
            <person name="Tapia R."/>
            <person name="Gilna P."/>
            <person name="Schmutz J."/>
            <person name="Larimer F."/>
            <person name="Land M."/>
            <person name="Hauser L."/>
            <person name="Kyrpides N."/>
            <person name="Kim E."/>
            <person name="Stahl D."/>
            <person name="Richardson P."/>
        </authorList>
    </citation>
    <scope>NUCLEOTIDE SEQUENCE [LARGE SCALE GENOMIC DNA]</scope>
    <source>
        <strain>JS42</strain>
    </source>
</reference>
<evidence type="ECO:0000255" key="1">
    <source>
        <dbReference type="HAMAP-Rule" id="MF_01584"/>
    </source>
</evidence>
<comment type="similarity">
    <text evidence="1">Belongs to the UPF0502 family.</text>
</comment>
<name>Y3392_ACISJ</name>
<dbReference type="EMBL" id="CP000539">
    <property type="protein sequence ID" value="ABM43512.1"/>
    <property type="molecule type" value="Genomic_DNA"/>
</dbReference>
<dbReference type="SMR" id="A1WB87"/>
<dbReference type="STRING" id="232721.Ajs_3392"/>
<dbReference type="KEGG" id="ajs:Ajs_3392"/>
<dbReference type="eggNOG" id="COG3132">
    <property type="taxonomic scope" value="Bacteria"/>
</dbReference>
<dbReference type="HOGENOM" id="CLU_057831_0_0_4"/>
<dbReference type="Proteomes" id="UP000000645">
    <property type="component" value="Chromosome"/>
</dbReference>
<dbReference type="Gene3D" id="1.10.10.10">
    <property type="entry name" value="Winged helix-like DNA-binding domain superfamily/Winged helix DNA-binding domain"/>
    <property type="match status" value="2"/>
</dbReference>
<dbReference type="HAMAP" id="MF_01584">
    <property type="entry name" value="UPF0502"/>
    <property type="match status" value="1"/>
</dbReference>
<dbReference type="InterPro" id="IPR007432">
    <property type="entry name" value="DUF480"/>
</dbReference>
<dbReference type="InterPro" id="IPR036388">
    <property type="entry name" value="WH-like_DNA-bd_sf"/>
</dbReference>
<dbReference type="InterPro" id="IPR036390">
    <property type="entry name" value="WH_DNA-bd_sf"/>
</dbReference>
<dbReference type="PANTHER" id="PTHR38768">
    <property type="entry name" value="UPF0502 PROTEIN YCEH"/>
    <property type="match status" value="1"/>
</dbReference>
<dbReference type="PANTHER" id="PTHR38768:SF1">
    <property type="entry name" value="UPF0502 PROTEIN YCEH"/>
    <property type="match status" value="1"/>
</dbReference>
<dbReference type="Pfam" id="PF04337">
    <property type="entry name" value="DUF480"/>
    <property type="match status" value="1"/>
</dbReference>
<dbReference type="SUPFAM" id="SSF46785">
    <property type="entry name" value="Winged helix' DNA-binding domain"/>
    <property type="match status" value="2"/>
</dbReference>
<protein>
    <recommendedName>
        <fullName evidence="1">UPF0502 protein Ajs_3392</fullName>
    </recommendedName>
</protein>
<organism>
    <name type="scientific">Acidovorax sp. (strain JS42)</name>
    <dbReference type="NCBI Taxonomy" id="232721"/>
    <lineage>
        <taxon>Bacteria</taxon>
        <taxon>Pseudomonadati</taxon>
        <taxon>Pseudomonadota</taxon>
        <taxon>Betaproteobacteria</taxon>
        <taxon>Burkholderiales</taxon>
        <taxon>Comamonadaceae</taxon>
        <taxon>Acidovorax</taxon>
    </lineage>
</organism>